<evidence type="ECO:0000255" key="1">
    <source>
        <dbReference type="HAMAP-Rule" id="MF_00150"/>
    </source>
</evidence>
<keyword id="KW-0028">Amino-acid biosynthesis</keyword>
<keyword id="KW-0055">Arginine biosynthesis</keyword>
<keyword id="KW-0963">Cytoplasm</keyword>
<keyword id="KW-0521">NADP</keyword>
<keyword id="KW-0560">Oxidoreductase</keyword>
<proteinExistence type="inferred from homology"/>
<sequence>MIKVGIVGGTGYTGVELLRLLAQHPQARVEVITSRSEAGVKVVDMYPNLRGHYDDLQFSVPDTQRLGACDVVFFATPHGVAHALAGELLDAGTRVIDLSADFRLADAEEWARWYGQPHGAPALLEEAVYGLPEVNREKIRQARLIAVPGCYPTATQLGLIPLLEAGLADASRLIADCKSGVSGAGRGAKVGSLFCEAGESMMAYAVKGHRHLPEISQGLRRASGGEVGLTFVPHLTPMIRGIHATLYAHVADRSVDLQALFEKRYANEPFVDVMPAGSHPETRSVRGANVCRIAVHRPQGGDLVVVLSVIDNLVKGASGQALQNMNILFGLDERLGLSHAALLP</sequence>
<gene>
    <name evidence="1" type="primary">argC</name>
    <name type="ordered locus">PSPA7_0803</name>
</gene>
<organism>
    <name type="scientific">Pseudomonas paraeruginosa (strain DSM 24068 / PA7)</name>
    <name type="common">Pseudomonas aeruginosa (strain PA7)</name>
    <dbReference type="NCBI Taxonomy" id="381754"/>
    <lineage>
        <taxon>Bacteria</taxon>
        <taxon>Pseudomonadati</taxon>
        <taxon>Pseudomonadota</taxon>
        <taxon>Gammaproteobacteria</taxon>
        <taxon>Pseudomonadales</taxon>
        <taxon>Pseudomonadaceae</taxon>
        <taxon>Pseudomonas</taxon>
        <taxon>Pseudomonas paraeruginosa</taxon>
    </lineage>
</organism>
<accession>A6UZG3</accession>
<name>ARGC_PSEP7</name>
<dbReference type="EC" id="1.2.1.38" evidence="1"/>
<dbReference type="EMBL" id="CP000744">
    <property type="protein sequence ID" value="ABR82761.1"/>
    <property type="molecule type" value="Genomic_DNA"/>
</dbReference>
<dbReference type="RefSeq" id="WP_012074218.1">
    <property type="nucleotide sequence ID" value="NC_009656.1"/>
</dbReference>
<dbReference type="SMR" id="A6UZG3"/>
<dbReference type="KEGG" id="pap:PSPA7_0803"/>
<dbReference type="HOGENOM" id="CLU_006384_0_1_6"/>
<dbReference type="UniPathway" id="UPA00068">
    <property type="reaction ID" value="UER00108"/>
</dbReference>
<dbReference type="Proteomes" id="UP000001582">
    <property type="component" value="Chromosome"/>
</dbReference>
<dbReference type="GO" id="GO:0005737">
    <property type="term" value="C:cytoplasm"/>
    <property type="evidence" value="ECO:0007669"/>
    <property type="project" value="UniProtKB-SubCell"/>
</dbReference>
<dbReference type="GO" id="GO:0003942">
    <property type="term" value="F:N-acetyl-gamma-glutamyl-phosphate reductase activity"/>
    <property type="evidence" value="ECO:0007669"/>
    <property type="project" value="UniProtKB-UniRule"/>
</dbReference>
<dbReference type="GO" id="GO:0051287">
    <property type="term" value="F:NAD binding"/>
    <property type="evidence" value="ECO:0007669"/>
    <property type="project" value="InterPro"/>
</dbReference>
<dbReference type="GO" id="GO:0070401">
    <property type="term" value="F:NADP+ binding"/>
    <property type="evidence" value="ECO:0007669"/>
    <property type="project" value="InterPro"/>
</dbReference>
<dbReference type="GO" id="GO:0006526">
    <property type="term" value="P:L-arginine biosynthetic process"/>
    <property type="evidence" value="ECO:0007669"/>
    <property type="project" value="UniProtKB-UniRule"/>
</dbReference>
<dbReference type="CDD" id="cd23934">
    <property type="entry name" value="AGPR_1_C"/>
    <property type="match status" value="1"/>
</dbReference>
<dbReference type="CDD" id="cd17895">
    <property type="entry name" value="AGPR_1_N"/>
    <property type="match status" value="1"/>
</dbReference>
<dbReference type="FunFam" id="3.30.360.10:FF:000014">
    <property type="entry name" value="N-acetyl-gamma-glutamyl-phosphate reductase"/>
    <property type="match status" value="1"/>
</dbReference>
<dbReference type="Gene3D" id="3.30.360.10">
    <property type="entry name" value="Dihydrodipicolinate Reductase, domain 2"/>
    <property type="match status" value="1"/>
</dbReference>
<dbReference type="Gene3D" id="3.40.50.720">
    <property type="entry name" value="NAD(P)-binding Rossmann-like Domain"/>
    <property type="match status" value="1"/>
</dbReference>
<dbReference type="HAMAP" id="MF_00150">
    <property type="entry name" value="ArgC_type1"/>
    <property type="match status" value="1"/>
</dbReference>
<dbReference type="InterPro" id="IPR023013">
    <property type="entry name" value="AGPR_AS"/>
</dbReference>
<dbReference type="InterPro" id="IPR000706">
    <property type="entry name" value="AGPR_type-1"/>
</dbReference>
<dbReference type="InterPro" id="IPR036291">
    <property type="entry name" value="NAD(P)-bd_dom_sf"/>
</dbReference>
<dbReference type="InterPro" id="IPR050085">
    <property type="entry name" value="NAGSA_dehydrogenase"/>
</dbReference>
<dbReference type="InterPro" id="IPR000534">
    <property type="entry name" value="Semialdehyde_DH_NAD-bd"/>
</dbReference>
<dbReference type="NCBIfam" id="TIGR01850">
    <property type="entry name" value="argC"/>
    <property type="match status" value="1"/>
</dbReference>
<dbReference type="PANTHER" id="PTHR32338:SF10">
    <property type="entry name" value="N-ACETYL-GAMMA-GLUTAMYL-PHOSPHATE REDUCTASE, CHLOROPLASTIC-RELATED"/>
    <property type="match status" value="1"/>
</dbReference>
<dbReference type="PANTHER" id="PTHR32338">
    <property type="entry name" value="N-ACETYL-GAMMA-GLUTAMYL-PHOSPHATE REDUCTASE, CHLOROPLASTIC-RELATED-RELATED"/>
    <property type="match status" value="1"/>
</dbReference>
<dbReference type="Pfam" id="PF01118">
    <property type="entry name" value="Semialdhyde_dh"/>
    <property type="match status" value="1"/>
</dbReference>
<dbReference type="Pfam" id="PF22698">
    <property type="entry name" value="Semialdhyde_dhC_1"/>
    <property type="match status" value="1"/>
</dbReference>
<dbReference type="SMART" id="SM00859">
    <property type="entry name" value="Semialdhyde_dh"/>
    <property type="match status" value="1"/>
</dbReference>
<dbReference type="SUPFAM" id="SSF55347">
    <property type="entry name" value="Glyceraldehyde-3-phosphate dehydrogenase-like, C-terminal domain"/>
    <property type="match status" value="1"/>
</dbReference>
<dbReference type="SUPFAM" id="SSF51735">
    <property type="entry name" value="NAD(P)-binding Rossmann-fold domains"/>
    <property type="match status" value="1"/>
</dbReference>
<dbReference type="PROSITE" id="PS01224">
    <property type="entry name" value="ARGC"/>
    <property type="match status" value="1"/>
</dbReference>
<comment type="function">
    <text evidence="1">Catalyzes the NADPH-dependent reduction of N-acetyl-5-glutamyl phosphate to yield N-acetyl-L-glutamate 5-semialdehyde.</text>
</comment>
<comment type="catalytic activity">
    <reaction evidence="1">
        <text>N-acetyl-L-glutamate 5-semialdehyde + phosphate + NADP(+) = N-acetyl-L-glutamyl 5-phosphate + NADPH + H(+)</text>
        <dbReference type="Rhea" id="RHEA:21588"/>
        <dbReference type="ChEBI" id="CHEBI:15378"/>
        <dbReference type="ChEBI" id="CHEBI:29123"/>
        <dbReference type="ChEBI" id="CHEBI:43474"/>
        <dbReference type="ChEBI" id="CHEBI:57783"/>
        <dbReference type="ChEBI" id="CHEBI:57936"/>
        <dbReference type="ChEBI" id="CHEBI:58349"/>
        <dbReference type="EC" id="1.2.1.38"/>
    </reaction>
</comment>
<comment type="pathway">
    <text evidence="1">Amino-acid biosynthesis; L-arginine biosynthesis; N(2)-acetyl-L-ornithine from L-glutamate: step 3/4.</text>
</comment>
<comment type="subcellular location">
    <subcellularLocation>
        <location evidence="1">Cytoplasm</location>
    </subcellularLocation>
</comment>
<comment type="similarity">
    <text evidence="1">Belongs to the NAGSA dehydrogenase family. Type 1 subfamily.</text>
</comment>
<protein>
    <recommendedName>
        <fullName evidence="1">N-acetyl-gamma-glutamyl-phosphate reductase</fullName>
        <shortName evidence="1">AGPR</shortName>
        <ecNumber evidence="1">1.2.1.38</ecNumber>
    </recommendedName>
    <alternativeName>
        <fullName evidence="1">N-acetyl-glutamate semialdehyde dehydrogenase</fullName>
        <shortName evidence="1">NAGSA dehydrogenase</shortName>
    </alternativeName>
</protein>
<feature type="chain" id="PRO_1000011039" description="N-acetyl-gamma-glutamyl-phosphate reductase">
    <location>
        <begin position="1"/>
        <end position="344"/>
    </location>
</feature>
<feature type="active site" evidence="1">
    <location>
        <position position="150"/>
    </location>
</feature>
<reference key="1">
    <citation type="submission" date="2007-06" db="EMBL/GenBank/DDBJ databases">
        <authorList>
            <person name="Dodson R.J."/>
            <person name="Harkins D."/>
            <person name="Paulsen I.T."/>
        </authorList>
    </citation>
    <scope>NUCLEOTIDE SEQUENCE [LARGE SCALE GENOMIC DNA]</scope>
    <source>
        <strain>DSM 24068 / PA7</strain>
    </source>
</reference>